<sequence>MRLTEKSEGEQQLKPNNSNAPNEDQEEEIQQSEQHTPARQRTQRADTQPSRCRLPSRRTPTTSSDRTINLLEVLPWPTEWIFNPYRLPALFELYPEFLLVFKEAFHDISHCLKAQMEKIGLPIILHLFALSTLYFYKFFLPTILSLSFFILLVLLLLLFIIVFILIFF</sequence>
<accession>Q5JXX7</accession>
<accession>Q8NHR4</accession>
<feature type="chain" id="PRO_0000284800" description="Transmembrane protein 31">
    <location>
        <begin position="1"/>
        <end position="168"/>
    </location>
</feature>
<feature type="transmembrane region" description="Helical" evidence="1">
    <location>
        <begin position="119"/>
        <end position="139"/>
    </location>
</feature>
<feature type="transmembrane region" description="Helical" evidence="1">
    <location>
        <begin position="148"/>
        <end position="168"/>
    </location>
</feature>
<feature type="region of interest" description="Disordered" evidence="2">
    <location>
        <begin position="1"/>
        <end position="63"/>
    </location>
</feature>
<feature type="compositionally biased region" description="Basic and acidic residues" evidence="2">
    <location>
        <begin position="1"/>
        <end position="11"/>
    </location>
</feature>
<feature type="compositionally biased region" description="Polar residues" evidence="2">
    <location>
        <begin position="13"/>
        <end position="22"/>
    </location>
</feature>
<feature type="compositionally biased region" description="Polar residues" evidence="2">
    <location>
        <begin position="35"/>
        <end position="48"/>
    </location>
</feature>
<feature type="compositionally biased region" description="Low complexity" evidence="2">
    <location>
        <begin position="49"/>
        <end position="63"/>
    </location>
</feature>
<feature type="sequence conflict" description="In Ref. 2; AAH29575." evidence="3" ref="2">
    <location>
        <begin position="154"/>
        <end position="155"/>
    </location>
</feature>
<dbReference type="EMBL" id="AL049610">
    <property type="status" value="NOT_ANNOTATED_CDS"/>
    <property type="molecule type" value="Genomic_DNA"/>
</dbReference>
<dbReference type="EMBL" id="BC029575">
    <property type="protein sequence ID" value="AAH29575.1"/>
    <property type="molecule type" value="mRNA"/>
</dbReference>
<dbReference type="CCDS" id="CCDS35359.1"/>
<dbReference type="RefSeq" id="NP_872347.2">
    <property type="nucleotide sequence ID" value="NM_182541.2"/>
</dbReference>
<dbReference type="BioGRID" id="128478">
    <property type="interactions" value="198"/>
</dbReference>
<dbReference type="FunCoup" id="Q5JXX7">
    <property type="interactions" value="5"/>
</dbReference>
<dbReference type="IntAct" id="Q5JXX7">
    <property type="interactions" value="60"/>
</dbReference>
<dbReference type="STRING" id="9606.ENSP00000316940"/>
<dbReference type="TCDB" id="9.B.356.1.1">
    <property type="family name" value="the tmem31 (tmem31) family"/>
</dbReference>
<dbReference type="iPTMnet" id="Q5JXX7"/>
<dbReference type="PhosphoSitePlus" id="Q5JXX7"/>
<dbReference type="BioMuta" id="TMEM31"/>
<dbReference type="MassIVE" id="Q5JXX7"/>
<dbReference type="PaxDb" id="9606-ENSP00000316940"/>
<dbReference type="PeptideAtlas" id="Q5JXX7"/>
<dbReference type="ProteomicsDB" id="63478"/>
<dbReference type="Antibodypedia" id="65930">
    <property type="antibodies" value="25 antibodies from 5 providers"/>
</dbReference>
<dbReference type="DNASU" id="203562"/>
<dbReference type="Ensembl" id="ENST00000319560.7">
    <property type="protein sequence ID" value="ENSP00000316940.6"/>
    <property type="gene ID" value="ENSG00000179363.7"/>
</dbReference>
<dbReference type="GeneID" id="203562"/>
<dbReference type="KEGG" id="hsa:203562"/>
<dbReference type="MANE-Select" id="ENST00000319560.7">
    <property type="protein sequence ID" value="ENSP00000316940.6"/>
    <property type="RefSeq nucleotide sequence ID" value="NM_182541.2"/>
    <property type="RefSeq protein sequence ID" value="NP_872347.2"/>
</dbReference>
<dbReference type="UCSC" id="uc004elh.4">
    <property type="organism name" value="human"/>
</dbReference>
<dbReference type="AGR" id="HGNC:28601"/>
<dbReference type="CTD" id="203562"/>
<dbReference type="DisGeNET" id="203562"/>
<dbReference type="GeneCards" id="TMEM31"/>
<dbReference type="HGNC" id="HGNC:28601">
    <property type="gene designation" value="TMEM31"/>
</dbReference>
<dbReference type="HPA" id="ENSG00000179363">
    <property type="expression patterns" value="Tissue enriched (testis)"/>
</dbReference>
<dbReference type="MIM" id="301102">
    <property type="type" value="gene"/>
</dbReference>
<dbReference type="neXtProt" id="NX_Q5JXX7"/>
<dbReference type="OpenTargets" id="ENSG00000179363"/>
<dbReference type="PharmGKB" id="PA134926659"/>
<dbReference type="VEuPathDB" id="HostDB:ENSG00000179363"/>
<dbReference type="eggNOG" id="ENOG502TM47">
    <property type="taxonomic scope" value="Eukaryota"/>
</dbReference>
<dbReference type="GeneTree" id="ENSGT00390000001638"/>
<dbReference type="HOGENOM" id="CLU_136296_0_0_1"/>
<dbReference type="InParanoid" id="Q5JXX7"/>
<dbReference type="OMA" id="QWFASPY"/>
<dbReference type="OrthoDB" id="9538979at2759"/>
<dbReference type="PAN-GO" id="Q5JXX7">
    <property type="GO annotations" value="0 GO annotations based on evolutionary models"/>
</dbReference>
<dbReference type="PhylomeDB" id="Q5JXX7"/>
<dbReference type="TreeFam" id="TF353626"/>
<dbReference type="PathwayCommons" id="Q5JXX7"/>
<dbReference type="SignaLink" id="Q5JXX7"/>
<dbReference type="BioGRID-ORCS" id="203562">
    <property type="hits" value="10 hits in 734 CRISPR screens"/>
</dbReference>
<dbReference type="GenomeRNAi" id="203562"/>
<dbReference type="Pharos" id="Q5JXX7">
    <property type="development level" value="Tdark"/>
</dbReference>
<dbReference type="PRO" id="PR:Q5JXX7"/>
<dbReference type="Proteomes" id="UP000005640">
    <property type="component" value="Chromosome X"/>
</dbReference>
<dbReference type="RNAct" id="Q5JXX7">
    <property type="molecule type" value="protein"/>
</dbReference>
<dbReference type="Bgee" id="ENSG00000179363">
    <property type="expression patterns" value="Expressed in sperm and 105 other cell types or tissues"/>
</dbReference>
<dbReference type="ExpressionAtlas" id="Q5JXX7">
    <property type="expression patterns" value="baseline and differential"/>
</dbReference>
<dbReference type="GO" id="GO:0016020">
    <property type="term" value="C:membrane"/>
    <property type="evidence" value="ECO:0007669"/>
    <property type="project" value="UniProtKB-SubCell"/>
</dbReference>
<keyword id="KW-0472">Membrane</keyword>
<keyword id="KW-1185">Reference proteome</keyword>
<keyword id="KW-0812">Transmembrane</keyword>
<keyword id="KW-1133">Transmembrane helix</keyword>
<gene>
    <name type="primary">TMEM31</name>
</gene>
<evidence type="ECO:0000255" key="1"/>
<evidence type="ECO:0000256" key="2">
    <source>
        <dbReference type="SAM" id="MobiDB-lite"/>
    </source>
</evidence>
<evidence type="ECO:0000305" key="3"/>
<proteinExistence type="evidence at protein level"/>
<organism>
    <name type="scientific">Homo sapiens</name>
    <name type="common">Human</name>
    <dbReference type="NCBI Taxonomy" id="9606"/>
    <lineage>
        <taxon>Eukaryota</taxon>
        <taxon>Metazoa</taxon>
        <taxon>Chordata</taxon>
        <taxon>Craniata</taxon>
        <taxon>Vertebrata</taxon>
        <taxon>Euteleostomi</taxon>
        <taxon>Mammalia</taxon>
        <taxon>Eutheria</taxon>
        <taxon>Euarchontoglires</taxon>
        <taxon>Primates</taxon>
        <taxon>Haplorrhini</taxon>
        <taxon>Catarrhini</taxon>
        <taxon>Hominidae</taxon>
        <taxon>Homo</taxon>
    </lineage>
</organism>
<reference key="1">
    <citation type="journal article" date="2005" name="Nature">
        <title>The DNA sequence of the human X chromosome.</title>
        <authorList>
            <person name="Ross M.T."/>
            <person name="Grafham D.V."/>
            <person name="Coffey A.J."/>
            <person name="Scherer S."/>
            <person name="McLay K."/>
            <person name="Muzny D."/>
            <person name="Platzer M."/>
            <person name="Howell G.R."/>
            <person name="Burrows C."/>
            <person name="Bird C.P."/>
            <person name="Frankish A."/>
            <person name="Lovell F.L."/>
            <person name="Howe K.L."/>
            <person name="Ashurst J.L."/>
            <person name="Fulton R.S."/>
            <person name="Sudbrak R."/>
            <person name="Wen G."/>
            <person name="Jones M.C."/>
            <person name="Hurles M.E."/>
            <person name="Andrews T.D."/>
            <person name="Scott C.E."/>
            <person name="Searle S."/>
            <person name="Ramser J."/>
            <person name="Whittaker A."/>
            <person name="Deadman R."/>
            <person name="Carter N.P."/>
            <person name="Hunt S.E."/>
            <person name="Chen R."/>
            <person name="Cree A."/>
            <person name="Gunaratne P."/>
            <person name="Havlak P."/>
            <person name="Hodgson A."/>
            <person name="Metzker M.L."/>
            <person name="Richards S."/>
            <person name="Scott G."/>
            <person name="Steffen D."/>
            <person name="Sodergren E."/>
            <person name="Wheeler D.A."/>
            <person name="Worley K.C."/>
            <person name="Ainscough R."/>
            <person name="Ambrose K.D."/>
            <person name="Ansari-Lari M.A."/>
            <person name="Aradhya S."/>
            <person name="Ashwell R.I."/>
            <person name="Babbage A.K."/>
            <person name="Bagguley C.L."/>
            <person name="Ballabio A."/>
            <person name="Banerjee R."/>
            <person name="Barker G.E."/>
            <person name="Barlow K.F."/>
            <person name="Barrett I.P."/>
            <person name="Bates K.N."/>
            <person name="Beare D.M."/>
            <person name="Beasley H."/>
            <person name="Beasley O."/>
            <person name="Beck A."/>
            <person name="Bethel G."/>
            <person name="Blechschmidt K."/>
            <person name="Brady N."/>
            <person name="Bray-Allen S."/>
            <person name="Bridgeman A.M."/>
            <person name="Brown A.J."/>
            <person name="Brown M.J."/>
            <person name="Bonnin D."/>
            <person name="Bruford E.A."/>
            <person name="Buhay C."/>
            <person name="Burch P."/>
            <person name="Burford D."/>
            <person name="Burgess J."/>
            <person name="Burrill W."/>
            <person name="Burton J."/>
            <person name="Bye J.M."/>
            <person name="Carder C."/>
            <person name="Carrel L."/>
            <person name="Chako J."/>
            <person name="Chapman J.C."/>
            <person name="Chavez D."/>
            <person name="Chen E."/>
            <person name="Chen G."/>
            <person name="Chen Y."/>
            <person name="Chen Z."/>
            <person name="Chinault C."/>
            <person name="Ciccodicola A."/>
            <person name="Clark S.Y."/>
            <person name="Clarke G."/>
            <person name="Clee C.M."/>
            <person name="Clegg S."/>
            <person name="Clerc-Blankenburg K."/>
            <person name="Clifford K."/>
            <person name="Cobley V."/>
            <person name="Cole C.G."/>
            <person name="Conquer J.S."/>
            <person name="Corby N."/>
            <person name="Connor R.E."/>
            <person name="David R."/>
            <person name="Davies J."/>
            <person name="Davis C."/>
            <person name="Davis J."/>
            <person name="Delgado O."/>
            <person name="Deshazo D."/>
            <person name="Dhami P."/>
            <person name="Ding Y."/>
            <person name="Dinh H."/>
            <person name="Dodsworth S."/>
            <person name="Draper H."/>
            <person name="Dugan-Rocha S."/>
            <person name="Dunham A."/>
            <person name="Dunn M."/>
            <person name="Durbin K.J."/>
            <person name="Dutta I."/>
            <person name="Eades T."/>
            <person name="Ellwood M."/>
            <person name="Emery-Cohen A."/>
            <person name="Errington H."/>
            <person name="Evans K.L."/>
            <person name="Faulkner L."/>
            <person name="Francis F."/>
            <person name="Frankland J."/>
            <person name="Fraser A.E."/>
            <person name="Galgoczy P."/>
            <person name="Gilbert J."/>
            <person name="Gill R."/>
            <person name="Gloeckner G."/>
            <person name="Gregory S.G."/>
            <person name="Gribble S."/>
            <person name="Griffiths C."/>
            <person name="Grocock R."/>
            <person name="Gu Y."/>
            <person name="Gwilliam R."/>
            <person name="Hamilton C."/>
            <person name="Hart E.A."/>
            <person name="Hawes A."/>
            <person name="Heath P.D."/>
            <person name="Heitmann K."/>
            <person name="Hennig S."/>
            <person name="Hernandez J."/>
            <person name="Hinzmann B."/>
            <person name="Ho S."/>
            <person name="Hoffs M."/>
            <person name="Howden P.J."/>
            <person name="Huckle E.J."/>
            <person name="Hume J."/>
            <person name="Hunt P.J."/>
            <person name="Hunt A.R."/>
            <person name="Isherwood J."/>
            <person name="Jacob L."/>
            <person name="Johnson D."/>
            <person name="Jones S."/>
            <person name="de Jong P.J."/>
            <person name="Joseph S.S."/>
            <person name="Keenan S."/>
            <person name="Kelly S."/>
            <person name="Kershaw J.K."/>
            <person name="Khan Z."/>
            <person name="Kioschis P."/>
            <person name="Klages S."/>
            <person name="Knights A.J."/>
            <person name="Kosiura A."/>
            <person name="Kovar-Smith C."/>
            <person name="Laird G.K."/>
            <person name="Langford C."/>
            <person name="Lawlor S."/>
            <person name="Leversha M."/>
            <person name="Lewis L."/>
            <person name="Liu W."/>
            <person name="Lloyd C."/>
            <person name="Lloyd D.M."/>
            <person name="Loulseged H."/>
            <person name="Loveland J.E."/>
            <person name="Lovell J.D."/>
            <person name="Lozado R."/>
            <person name="Lu J."/>
            <person name="Lyne R."/>
            <person name="Ma J."/>
            <person name="Maheshwari M."/>
            <person name="Matthews L.H."/>
            <person name="McDowall J."/>
            <person name="McLaren S."/>
            <person name="McMurray A."/>
            <person name="Meidl P."/>
            <person name="Meitinger T."/>
            <person name="Milne S."/>
            <person name="Miner G."/>
            <person name="Mistry S.L."/>
            <person name="Morgan M."/>
            <person name="Morris S."/>
            <person name="Mueller I."/>
            <person name="Mullikin J.C."/>
            <person name="Nguyen N."/>
            <person name="Nordsiek G."/>
            <person name="Nyakatura G."/>
            <person name="O'dell C.N."/>
            <person name="Okwuonu G."/>
            <person name="Palmer S."/>
            <person name="Pandian R."/>
            <person name="Parker D."/>
            <person name="Parrish J."/>
            <person name="Pasternak S."/>
            <person name="Patel D."/>
            <person name="Pearce A.V."/>
            <person name="Pearson D.M."/>
            <person name="Pelan S.E."/>
            <person name="Perez L."/>
            <person name="Porter K.M."/>
            <person name="Ramsey Y."/>
            <person name="Reichwald K."/>
            <person name="Rhodes S."/>
            <person name="Ridler K.A."/>
            <person name="Schlessinger D."/>
            <person name="Schueler M.G."/>
            <person name="Sehra H.K."/>
            <person name="Shaw-Smith C."/>
            <person name="Shen H."/>
            <person name="Sheridan E.M."/>
            <person name="Shownkeen R."/>
            <person name="Skuce C.D."/>
            <person name="Smith M.L."/>
            <person name="Sotheran E.C."/>
            <person name="Steingruber H.E."/>
            <person name="Steward C.A."/>
            <person name="Storey R."/>
            <person name="Swann R.M."/>
            <person name="Swarbreck D."/>
            <person name="Tabor P.E."/>
            <person name="Taudien S."/>
            <person name="Taylor T."/>
            <person name="Teague B."/>
            <person name="Thomas K."/>
            <person name="Thorpe A."/>
            <person name="Timms K."/>
            <person name="Tracey A."/>
            <person name="Trevanion S."/>
            <person name="Tromans A.C."/>
            <person name="d'Urso M."/>
            <person name="Verduzco D."/>
            <person name="Villasana D."/>
            <person name="Waldron L."/>
            <person name="Wall M."/>
            <person name="Wang Q."/>
            <person name="Warren J."/>
            <person name="Warry G.L."/>
            <person name="Wei X."/>
            <person name="West A."/>
            <person name="Whitehead S.L."/>
            <person name="Whiteley M.N."/>
            <person name="Wilkinson J.E."/>
            <person name="Willey D.L."/>
            <person name="Williams G."/>
            <person name="Williams L."/>
            <person name="Williamson A."/>
            <person name="Williamson H."/>
            <person name="Wilming L."/>
            <person name="Woodmansey R.L."/>
            <person name="Wray P.W."/>
            <person name="Yen J."/>
            <person name="Zhang J."/>
            <person name="Zhou J."/>
            <person name="Zoghbi H."/>
            <person name="Zorilla S."/>
            <person name="Buck D."/>
            <person name="Reinhardt R."/>
            <person name="Poustka A."/>
            <person name="Rosenthal A."/>
            <person name="Lehrach H."/>
            <person name="Meindl A."/>
            <person name="Minx P.J."/>
            <person name="Hillier L.W."/>
            <person name="Willard H.F."/>
            <person name="Wilson R.K."/>
            <person name="Waterston R.H."/>
            <person name="Rice C.M."/>
            <person name="Vaudin M."/>
            <person name="Coulson A."/>
            <person name="Nelson D.L."/>
            <person name="Weinstock G."/>
            <person name="Sulston J.E."/>
            <person name="Durbin R.M."/>
            <person name="Hubbard T."/>
            <person name="Gibbs R.A."/>
            <person name="Beck S."/>
            <person name="Rogers J."/>
            <person name="Bentley D.R."/>
        </authorList>
    </citation>
    <scope>NUCLEOTIDE SEQUENCE [LARGE SCALE GENOMIC DNA]</scope>
</reference>
<reference key="2">
    <citation type="journal article" date="2004" name="Genome Res.">
        <title>The status, quality, and expansion of the NIH full-length cDNA project: the Mammalian Gene Collection (MGC).</title>
        <authorList>
            <consortium name="The MGC Project Team"/>
        </authorList>
    </citation>
    <scope>NUCLEOTIDE SEQUENCE [LARGE SCALE MRNA]</scope>
    <source>
        <tissue>Testis</tissue>
    </source>
</reference>
<protein>
    <recommendedName>
        <fullName>Transmembrane protein 31</fullName>
    </recommendedName>
</protein>
<name>TMM31_HUMAN</name>
<comment type="interaction">
    <interactant intactId="EBI-10244617">
        <id>Q5JXX7</id>
    </interactant>
    <interactant intactId="EBI-347996">
        <id>O43765</id>
        <label>SGTA</label>
    </interactant>
    <organismsDiffer>false</organismsDiffer>
    <experiments>3</experiments>
</comment>
<comment type="interaction">
    <interactant intactId="EBI-10244617">
        <id>Q5JXX7</id>
    </interactant>
    <interactant intactId="EBI-741480">
        <id>Q9UMX0</id>
        <label>UBQLN1</label>
    </interactant>
    <organismsDiffer>false</organismsDiffer>
    <experiments>5</experiments>
</comment>
<comment type="interaction">
    <interactant intactId="EBI-10244617">
        <id>Q5JXX7</id>
    </interactant>
    <interactant intactId="EBI-10173939">
        <id>Q9UMX0-2</id>
        <label>UBQLN1</label>
    </interactant>
    <organismsDiffer>false</organismsDiffer>
    <experiments>3</experiments>
</comment>
<comment type="subcellular location">
    <subcellularLocation>
        <location evidence="3">Membrane</location>
        <topology evidence="3">Multi-pass membrane protein</topology>
    </subcellularLocation>
</comment>